<accession>Q7NZB2</accession>
<proteinExistence type="inferred from homology"/>
<comment type="function">
    <text evidence="1">Probably deamidates glutamine residues to glutamate on methyl-accepting chemotaxis receptors (MCPs), playing an important role in chemotaxis.</text>
</comment>
<comment type="catalytic activity">
    <reaction evidence="1">
        <text>L-glutaminyl-[protein] + H2O = L-glutamyl-[protein] + NH4(+)</text>
        <dbReference type="Rhea" id="RHEA:16441"/>
        <dbReference type="Rhea" id="RHEA-COMP:10207"/>
        <dbReference type="Rhea" id="RHEA-COMP:10208"/>
        <dbReference type="ChEBI" id="CHEBI:15377"/>
        <dbReference type="ChEBI" id="CHEBI:28938"/>
        <dbReference type="ChEBI" id="CHEBI:29973"/>
        <dbReference type="ChEBI" id="CHEBI:30011"/>
        <dbReference type="EC" id="3.5.1.44"/>
    </reaction>
</comment>
<comment type="similarity">
    <text evidence="1">Belongs to the CheD family.</text>
</comment>
<reference key="1">
    <citation type="journal article" date="2003" name="Proc. Natl. Acad. Sci. U.S.A.">
        <title>The complete genome sequence of Chromobacterium violaceum reveals remarkable and exploitable bacterial adaptability.</title>
        <authorList>
            <person name="Vasconcelos A.T.R."/>
            <person name="de Almeida D.F."/>
            <person name="Hungria M."/>
            <person name="Guimaraes C.T."/>
            <person name="Antonio R.V."/>
            <person name="Almeida F.C."/>
            <person name="de Almeida L.G.P."/>
            <person name="de Almeida R."/>
            <person name="Alves-Gomes J.A."/>
            <person name="Andrade E.M."/>
            <person name="Araripe J."/>
            <person name="de Araujo M.F.F."/>
            <person name="Astolfi-Filho S."/>
            <person name="Azevedo V."/>
            <person name="Baptista A.J."/>
            <person name="Bataus L.A.M."/>
            <person name="Batista J.S."/>
            <person name="Belo A."/>
            <person name="van den Berg C."/>
            <person name="Bogo M."/>
            <person name="Bonatto S."/>
            <person name="Bordignon J."/>
            <person name="Brigido M.M."/>
            <person name="Brito C.A."/>
            <person name="Brocchi M."/>
            <person name="Burity H.A."/>
            <person name="Camargo A.A."/>
            <person name="Cardoso D.D.P."/>
            <person name="Carneiro N.P."/>
            <person name="Carraro D.M."/>
            <person name="Carvalho C.M.B."/>
            <person name="Cascardo J.C.M."/>
            <person name="Cavada B.S."/>
            <person name="Chueire L.M.O."/>
            <person name="Creczynski-Pasa T.B."/>
            <person name="Cunha-Junior N.C."/>
            <person name="Fagundes N."/>
            <person name="Falcao C.L."/>
            <person name="Fantinatti F."/>
            <person name="Farias I.P."/>
            <person name="Felipe M.S.S."/>
            <person name="Ferrari L.P."/>
            <person name="Ferro J.A."/>
            <person name="Ferro M.I.T."/>
            <person name="Franco G.R."/>
            <person name="Freitas N.S.A."/>
            <person name="Furlan L.R."/>
            <person name="Gazzinelli R.T."/>
            <person name="Gomes E.A."/>
            <person name="Goncalves P.R."/>
            <person name="Grangeiro T.B."/>
            <person name="Grattapaglia D."/>
            <person name="Grisard E.C."/>
            <person name="Hanna E.S."/>
            <person name="Jardim S.N."/>
            <person name="Laurino J."/>
            <person name="Leoi L.C.T."/>
            <person name="Lima L.F.A."/>
            <person name="Loureiro M.F."/>
            <person name="Lyra M.C.C.P."/>
            <person name="Madeira H.M.F."/>
            <person name="Manfio G.P."/>
            <person name="Maranhao A.Q."/>
            <person name="Martins W.S."/>
            <person name="di Mauro S.M.Z."/>
            <person name="de Medeiros S.R.B."/>
            <person name="Meissner R.V."/>
            <person name="Moreira M.A.M."/>
            <person name="Nascimento F.F."/>
            <person name="Nicolas M.F."/>
            <person name="Oliveira J.G."/>
            <person name="Oliveira S.C."/>
            <person name="Paixao R.F.C."/>
            <person name="Parente J.A."/>
            <person name="Pedrosa F.O."/>
            <person name="Pena S.D.J."/>
            <person name="Pereira J.O."/>
            <person name="Pereira M."/>
            <person name="Pinto L.S.R.C."/>
            <person name="Pinto L.S."/>
            <person name="Porto J.I.R."/>
            <person name="Potrich D.P."/>
            <person name="Ramalho-Neto C.E."/>
            <person name="Reis A.M.M."/>
            <person name="Rigo L.U."/>
            <person name="Rondinelli E."/>
            <person name="Santos E.B.P."/>
            <person name="Santos F.R."/>
            <person name="Schneider M.P.C."/>
            <person name="Seuanez H.N."/>
            <person name="Silva A.M.R."/>
            <person name="da Silva A.L.C."/>
            <person name="Silva D.W."/>
            <person name="Silva R."/>
            <person name="Simoes I.C."/>
            <person name="Simon D."/>
            <person name="Soares C.M.A."/>
            <person name="Soares R.B.A."/>
            <person name="Souza E.M."/>
            <person name="Souza K.R.L."/>
            <person name="Souza R.C."/>
            <person name="Steffens M.B.R."/>
            <person name="Steindel M."/>
            <person name="Teixeira S.R."/>
            <person name="Urmenyi T."/>
            <person name="Vettore A."/>
            <person name="Wassem R."/>
            <person name="Zaha A."/>
            <person name="Simpson A.J.G."/>
        </authorList>
    </citation>
    <scope>NUCLEOTIDE SEQUENCE [LARGE SCALE GENOMIC DNA]</scope>
    <source>
        <strain>ATCC 12472 / DSM 30191 / JCM 1249 / CCUG 213 / NBRC 12614 / NCIMB 9131 / NCTC 9757 / MK</strain>
    </source>
</reference>
<protein>
    <recommendedName>
        <fullName evidence="1">Probable chemoreceptor glutamine deamidase CheD 1</fullName>
        <ecNumber evidence="1">3.5.1.44</ecNumber>
    </recommendedName>
</protein>
<dbReference type="EC" id="3.5.1.44" evidence="1"/>
<dbReference type="EMBL" id="AE016825">
    <property type="protein sequence ID" value="AAQ58684.1"/>
    <property type="molecule type" value="Genomic_DNA"/>
</dbReference>
<dbReference type="SMR" id="Q7NZB2"/>
<dbReference type="STRING" id="243365.CV_1010"/>
<dbReference type="KEGG" id="cvi:CV_1010"/>
<dbReference type="eggNOG" id="COG1871">
    <property type="taxonomic scope" value="Bacteria"/>
</dbReference>
<dbReference type="HOGENOM" id="CLU_087854_1_1_4"/>
<dbReference type="OrthoDB" id="9807202at2"/>
<dbReference type="Proteomes" id="UP000001424">
    <property type="component" value="Chromosome"/>
</dbReference>
<dbReference type="GO" id="GO:0050568">
    <property type="term" value="F:protein-glutamine glutaminase activity"/>
    <property type="evidence" value="ECO:0007669"/>
    <property type="project" value="UniProtKB-UniRule"/>
</dbReference>
<dbReference type="GO" id="GO:0006935">
    <property type="term" value="P:chemotaxis"/>
    <property type="evidence" value="ECO:0007669"/>
    <property type="project" value="UniProtKB-UniRule"/>
</dbReference>
<dbReference type="CDD" id="cd16352">
    <property type="entry name" value="CheD"/>
    <property type="match status" value="1"/>
</dbReference>
<dbReference type="Gene3D" id="3.30.1330.200">
    <property type="match status" value="1"/>
</dbReference>
<dbReference type="HAMAP" id="MF_01440">
    <property type="entry name" value="CheD"/>
    <property type="match status" value="1"/>
</dbReference>
<dbReference type="InterPro" id="IPR038592">
    <property type="entry name" value="CheD-like_sf"/>
</dbReference>
<dbReference type="InterPro" id="IPR005659">
    <property type="entry name" value="Chemorcpt_Glu_NH3ase_CheD"/>
</dbReference>
<dbReference type="InterPro" id="IPR011324">
    <property type="entry name" value="Cytotoxic_necrot_fac-like_cat"/>
</dbReference>
<dbReference type="PANTHER" id="PTHR35147:SF3">
    <property type="entry name" value="CHEMORECEPTOR GLUTAMINE DEAMIDASE CHED 1-RELATED"/>
    <property type="match status" value="1"/>
</dbReference>
<dbReference type="PANTHER" id="PTHR35147">
    <property type="entry name" value="CHEMORECEPTOR GLUTAMINE DEAMIDASE CHED-RELATED"/>
    <property type="match status" value="1"/>
</dbReference>
<dbReference type="Pfam" id="PF03975">
    <property type="entry name" value="CheD"/>
    <property type="match status" value="1"/>
</dbReference>
<dbReference type="SUPFAM" id="SSF64438">
    <property type="entry name" value="CNF1/YfiH-like putative cysteine hydrolases"/>
    <property type="match status" value="1"/>
</dbReference>
<feature type="chain" id="PRO_0000251022" description="Probable chemoreceptor glutamine deamidase CheD 1">
    <location>
        <begin position="1"/>
        <end position="193"/>
    </location>
</feature>
<feature type="region of interest" description="Disordered" evidence="2">
    <location>
        <begin position="1"/>
        <end position="26"/>
    </location>
</feature>
<keyword id="KW-0145">Chemotaxis</keyword>
<keyword id="KW-0378">Hydrolase</keyword>
<keyword id="KW-1185">Reference proteome</keyword>
<sequence>MPHTPPAYPAASADHRPPSSPPAEPAGEAVFLHPGDWHFGDSQTRIRTLLGSCVSITLWHPQAKVGGMCHYLLAQRTPHRGESLSGRYGDEAMLLLLREILDTGLPLQEFQARLIGGASMLLSRERKLSHDVPSRNIQQARLMVKQLGLKLLAEDLGGNCPRMVLFDVASGNVWIKQSQEAELEQAPHTRTRK</sequence>
<name>CHED1_CHRVO</name>
<evidence type="ECO:0000255" key="1">
    <source>
        <dbReference type="HAMAP-Rule" id="MF_01440"/>
    </source>
</evidence>
<evidence type="ECO:0000256" key="2">
    <source>
        <dbReference type="SAM" id="MobiDB-lite"/>
    </source>
</evidence>
<organism>
    <name type="scientific">Chromobacterium violaceum (strain ATCC 12472 / DSM 30191 / JCM 1249 / CCUG 213 / NBRC 12614 / NCIMB 9131 / NCTC 9757 / MK)</name>
    <dbReference type="NCBI Taxonomy" id="243365"/>
    <lineage>
        <taxon>Bacteria</taxon>
        <taxon>Pseudomonadati</taxon>
        <taxon>Pseudomonadota</taxon>
        <taxon>Betaproteobacteria</taxon>
        <taxon>Neisseriales</taxon>
        <taxon>Chromobacteriaceae</taxon>
        <taxon>Chromobacterium</taxon>
    </lineage>
</organism>
<gene>
    <name evidence="1" type="primary">cheD1</name>
    <name type="ordered locus">CV_1010</name>
</gene>